<name>DIVIB_STAPH</name>
<comment type="function">
    <text evidence="1">Cell division protein that may be involved in stabilizing or promoting the assembly of the division complex.</text>
</comment>
<comment type="subcellular location">
    <subcellularLocation>
        <location evidence="1">Cell membrane</location>
        <topology evidence="1">Single-pass type II membrane protein</topology>
    </subcellularLocation>
    <text evidence="1">Localizes to the division septum.</text>
</comment>
<comment type="similarity">
    <text evidence="1">Belongs to the FtsQ/DivIB family. DivIB subfamily.</text>
</comment>
<keyword id="KW-0131">Cell cycle</keyword>
<keyword id="KW-0132">Cell division</keyword>
<keyword id="KW-1003">Cell membrane</keyword>
<keyword id="KW-0472">Membrane</keyword>
<keyword id="KW-0812">Transmembrane</keyword>
<keyword id="KW-1133">Transmembrane helix</keyword>
<organism>
    <name type="scientific">Staphylococcus pseudintermedius (strain HKU10-03)</name>
    <dbReference type="NCBI Taxonomy" id="937773"/>
    <lineage>
        <taxon>Bacteria</taxon>
        <taxon>Bacillati</taxon>
        <taxon>Bacillota</taxon>
        <taxon>Bacilli</taxon>
        <taxon>Bacillales</taxon>
        <taxon>Staphylococcaceae</taxon>
        <taxon>Staphylococcus</taxon>
        <taxon>Staphylococcus intermedius group</taxon>
    </lineage>
</organism>
<gene>
    <name evidence="1" type="primary">divIB</name>
    <name type="ordered locus">SPSINT_0883</name>
</gene>
<proteinExistence type="inferred from homology"/>
<protein>
    <recommendedName>
        <fullName evidence="1">Cell division protein DivIB</fullName>
    </recommendedName>
</protein>
<feature type="chain" id="PRO_0000414787" description="Cell division protein DivIB">
    <location>
        <begin position="1"/>
        <end position="296"/>
    </location>
</feature>
<feature type="topological domain" description="Cytoplasmic" evidence="1">
    <location>
        <begin position="1"/>
        <end position="29"/>
    </location>
</feature>
<feature type="transmembrane region" description="Helical" evidence="1">
    <location>
        <begin position="30"/>
        <end position="50"/>
    </location>
</feature>
<feature type="topological domain" description="Extracellular" evidence="1">
    <location>
        <begin position="51"/>
        <end position="296"/>
    </location>
</feature>
<feature type="domain" description="POTRA" evidence="2">
    <location>
        <begin position="51"/>
        <end position="119"/>
    </location>
</feature>
<feature type="region of interest" description="Disordered" evidence="3">
    <location>
        <begin position="256"/>
        <end position="296"/>
    </location>
</feature>
<feature type="compositionally biased region" description="Polar residues" evidence="3">
    <location>
        <begin position="256"/>
        <end position="273"/>
    </location>
</feature>
<feature type="compositionally biased region" description="Basic and acidic residues" evidence="3">
    <location>
        <begin position="274"/>
        <end position="296"/>
    </location>
</feature>
<reference key="1">
    <citation type="journal article" date="2011" name="J. Bacteriol.">
        <title>Complete genome sequence of the veterinary pathogen Staphylococcus pseudintermedius strain HKU10-03, isolated in a case of canine pyoderma.</title>
        <authorList>
            <person name="Tse H."/>
            <person name="Tsoi H.W."/>
            <person name="Leung S.P."/>
            <person name="Urquhart I.J."/>
            <person name="Lau S.K."/>
            <person name="Woo P.C."/>
            <person name="Yuen K.Y."/>
        </authorList>
    </citation>
    <scope>NUCLEOTIDE SEQUENCE [LARGE SCALE GENOMIC DNA]</scope>
    <source>
        <strain>HKU10-03</strain>
    </source>
</reference>
<sequence length="296" mass="33617">MTKEIPKINNEYLKEKRKKQRIQQRRVQRMIVGILVVIVLLILVYMFTPISHIKSADIKGNHYVSKQDILKELDIQNHPRIYAYSSDDAETRLKQNELIDEVTIEKGLFNPIEVNVKEHTIIAITTEKSRVVPMIENGKVLKDYKQEVPNEAPYIEGFKGAEKRNLIDALQKMDRTTRAQISEIVSAPQKDQPHLIKLFMRDGIEVVGNTNTIAEKLKYYPSMSQALEKDETGKLKKSGFIDLSVGATFIPYDNVNNGQTSSASAKEVQSGTASEDKAKDDLQKALNKIKDEESSE</sequence>
<accession>E8SFP1</accession>
<dbReference type="EMBL" id="CP002439">
    <property type="protein sequence ID" value="ADV05411.1"/>
    <property type="molecule type" value="Genomic_DNA"/>
</dbReference>
<dbReference type="RefSeq" id="WP_014614179.1">
    <property type="nucleotide sequence ID" value="NC_014925.1"/>
</dbReference>
<dbReference type="GeneID" id="93824947"/>
<dbReference type="KEGG" id="ssd:SPSINT_0883"/>
<dbReference type="HOGENOM" id="CLU_046278_3_0_9"/>
<dbReference type="GO" id="GO:0032153">
    <property type="term" value="C:cell division site"/>
    <property type="evidence" value="ECO:0007669"/>
    <property type="project" value="UniProtKB-UniRule"/>
</dbReference>
<dbReference type="GO" id="GO:0005886">
    <property type="term" value="C:plasma membrane"/>
    <property type="evidence" value="ECO:0007669"/>
    <property type="project" value="UniProtKB-SubCell"/>
</dbReference>
<dbReference type="GO" id="GO:0043093">
    <property type="term" value="P:FtsZ-dependent cytokinesis"/>
    <property type="evidence" value="ECO:0007669"/>
    <property type="project" value="UniProtKB-UniRule"/>
</dbReference>
<dbReference type="Gene3D" id="3.40.50.10960">
    <property type="match status" value="1"/>
</dbReference>
<dbReference type="Gene3D" id="3.10.20.310">
    <property type="entry name" value="membrane protein fhac"/>
    <property type="match status" value="1"/>
</dbReference>
<dbReference type="HAMAP" id="MF_00912">
    <property type="entry name" value="DivIB"/>
    <property type="match status" value="1"/>
</dbReference>
<dbReference type="InterPro" id="IPR005548">
    <property type="entry name" value="Cell_div_FtsQ/DivIB_C"/>
</dbReference>
<dbReference type="InterPro" id="IPR026580">
    <property type="entry name" value="DivIB"/>
</dbReference>
<dbReference type="InterPro" id="IPR050487">
    <property type="entry name" value="FtsQ_DivIB"/>
</dbReference>
<dbReference type="InterPro" id="IPR034746">
    <property type="entry name" value="POTRA"/>
</dbReference>
<dbReference type="InterPro" id="IPR013685">
    <property type="entry name" value="POTRA_FtsQ_type"/>
</dbReference>
<dbReference type="PANTHER" id="PTHR37820">
    <property type="entry name" value="CELL DIVISION PROTEIN DIVIB"/>
    <property type="match status" value="1"/>
</dbReference>
<dbReference type="PANTHER" id="PTHR37820:SF1">
    <property type="entry name" value="CELL DIVISION PROTEIN FTSQ"/>
    <property type="match status" value="1"/>
</dbReference>
<dbReference type="Pfam" id="PF03799">
    <property type="entry name" value="FtsQ_DivIB_C"/>
    <property type="match status" value="1"/>
</dbReference>
<dbReference type="Pfam" id="PF08478">
    <property type="entry name" value="POTRA_1"/>
    <property type="match status" value="1"/>
</dbReference>
<dbReference type="PROSITE" id="PS51779">
    <property type="entry name" value="POTRA"/>
    <property type="match status" value="1"/>
</dbReference>
<evidence type="ECO:0000255" key="1">
    <source>
        <dbReference type="HAMAP-Rule" id="MF_00912"/>
    </source>
</evidence>
<evidence type="ECO:0000255" key="2">
    <source>
        <dbReference type="PROSITE-ProRule" id="PRU01115"/>
    </source>
</evidence>
<evidence type="ECO:0000256" key="3">
    <source>
        <dbReference type="SAM" id="MobiDB-lite"/>
    </source>
</evidence>